<name>SC5AC_HUMAN</name>
<evidence type="ECO:0000250" key="1">
    <source>
        <dbReference type="UniProtKB" id="Q49B93"/>
    </source>
</evidence>
<evidence type="ECO:0000250" key="2">
    <source>
        <dbReference type="UniProtKB" id="Q7T384"/>
    </source>
</evidence>
<evidence type="ECO:0000255" key="3"/>
<evidence type="ECO:0000269" key="4">
    <source>
    </source>
</evidence>
<evidence type="ECO:0000303" key="5">
    <source>
    </source>
</evidence>
<evidence type="ECO:0000305" key="6"/>
<evidence type="ECO:0000312" key="7">
    <source>
        <dbReference type="HGNC" id="HGNC:28750"/>
    </source>
</evidence>
<gene>
    <name evidence="7" type="primary">SLC5A12</name>
    <name type="synonym">SMCT2</name>
</gene>
<proteinExistence type="evidence at protein level"/>
<dbReference type="EMBL" id="AY299482">
    <property type="protein sequence ID" value="AAQ73572.1"/>
    <property type="molecule type" value="mRNA"/>
</dbReference>
<dbReference type="EMBL" id="AC083755">
    <property type="status" value="NOT_ANNOTATED_CDS"/>
    <property type="molecule type" value="Genomic_DNA"/>
</dbReference>
<dbReference type="EMBL" id="BC049207">
    <property type="protein sequence ID" value="AAH49207.1"/>
    <property type="molecule type" value="mRNA"/>
</dbReference>
<dbReference type="CCDS" id="CCDS7860.2">
    <molecule id="Q1EHB4-1"/>
</dbReference>
<dbReference type="RefSeq" id="NP_848593.2">
    <molecule id="Q1EHB4-1"/>
    <property type="nucleotide sequence ID" value="NM_178498.4"/>
</dbReference>
<dbReference type="SMR" id="Q1EHB4"/>
<dbReference type="BioGRID" id="127745">
    <property type="interactions" value="4"/>
</dbReference>
<dbReference type="FunCoup" id="Q1EHB4">
    <property type="interactions" value="34"/>
</dbReference>
<dbReference type="IntAct" id="Q1EHB4">
    <property type="interactions" value="3"/>
</dbReference>
<dbReference type="MINT" id="Q1EHB4"/>
<dbReference type="STRING" id="9606.ENSP00000379326"/>
<dbReference type="TCDB" id="2.A.21.5.6">
    <property type="family name" value="the solute:sodium symporter (sss) family"/>
</dbReference>
<dbReference type="GlyCosmos" id="Q1EHB4">
    <property type="glycosylation" value="1 site, No reported glycans"/>
</dbReference>
<dbReference type="GlyGen" id="Q1EHB4">
    <property type="glycosylation" value="1 site"/>
</dbReference>
<dbReference type="iPTMnet" id="Q1EHB4"/>
<dbReference type="PhosphoSitePlus" id="Q1EHB4"/>
<dbReference type="BioMuta" id="SLC5A12"/>
<dbReference type="DMDM" id="189046187"/>
<dbReference type="jPOST" id="Q1EHB4"/>
<dbReference type="MassIVE" id="Q1EHB4"/>
<dbReference type="PaxDb" id="9606-ENSP00000379326"/>
<dbReference type="PeptideAtlas" id="Q1EHB4"/>
<dbReference type="ProteomicsDB" id="61209">
    <molecule id="Q1EHB4-1"/>
</dbReference>
<dbReference type="ProteomicsDB" id="61210">
    <molecule id="Q1EHB4-2"/>
</dbReference>
<dbReference type="Antibodypedia" id="48784">
    <property type="antibodies" value="23 antibodies from 16 providers"/>
</dbReference>
<dbReference type="DNASU" id="159963"/>
<dbReference type="Ensembl" id="ENST00000280467.10">
    <molecule id="Q1EHB4-2"/>
    <property type="protein sequence ID" value="ENSP00000280467.6"/>
    <property type="gene ID" value="ENSG00000148942.15"/>
</dbReference>
<dbReference type="Ensembl" id="ENST00000396005.8">
    <molecule id="Q1EHB4-1"/>
    <property type="protein sequence ID" value="ENSP00000379326.3"/>
    <property type="gene ID" value="ENSG00000148942.15"/>
</dbReference>
<dbReference type="GeneID" id="159963"/>
<dbReference type="KEGG" id="hsa:159963"/>
<dbReference type="MANE-Select" id="ENST00000396005.8">
    <property type="protein sequence ID" value="ENSP00000379326.3"/>
    <property type="RefSeq nucleotide sequence ID" value="NM_178498.4"/>
    <property type="RefSeq protein sequence ID" value="NP_848593.2"/>
</dbReference>
<dbReference type="UCSC" id="uc001mra.3">
    <molecule id="Q1EHB4-1"/>
    <property type="organism name" value="human"/>
</dbReference>
<dbReference type="AGR" id="HGNC:28750"/>
<dbReference type="CTD" id="159963"/>
<dbReference type="DisGeNET" id="159963"/>
<dbReference type="GeneCards" id="SLC5A12"/>
<dbReference type="HGNC" id="HGNC:28750">
    <property type="gene designation" value="SLC5A12"/>
</dbReference>
<dbReference type="HPA" id="ENSG00000148942">
    <property type="expression patterns" value="Tissue enhanced (epididymis, intestine, kidney)"/>
</dbReference>
<dbReference type="MIM" id="612455">
    <property type="type" value="gene"/>
</dbReference>
<dbReference type="neXtProt" id="NX_Q1EHB4"/>
<dbReference type="OpenTargets" id="ENSG00000148942"/>
<dbReference type="PharmGKB" id="PA134873929"/>
<dbReference type="VEuPathDB" id="HostDB:ENSG00000148942"/>
<dbReference type="eggNOG" id="KOG2349">
    <property type="taxonomic scope" value="Eukaryota"/>
</dbReference>
<dbReference type="GeneTree" id="ENSGT00940000159545"/>
<dbReference type="HOGENOM" id="CLU_018808_11_1_1"/>
<dbReference type="InParanoid" id="Q1EHB4"/>
<dbReference type="OMA" id="QMVVMFV"/>
<dbReference type="OrthoDB" id="6132759at2759"/>
<dbReference type="PAN-GO" id="Q1EHB4">
    <property type="GO annotations" value="3 GO annotations based on evolutionary models"/>
</dbReference>
<dbReference type="PhylomeDB" id="Q1EHB4"/>
<dbReference type="TreeFam" id="TF316728"/>
<dbReference type="PathwayCommons" id="Q1EHB4"/>
<dbReference type="Reactome" id="R-HSA-427601">
    <property type="pathway name" value="Multifunctional anion exchangers"/>
</dbReference>
<dbReference type="SignaLink" id="Q1EHB4"/>
<dbReference type="BioGRID-ORCS" id="159963">
    <property type="hits" value="7 hits in 1145 CRISPR screens"/>
</dbReference>
<dbReference type="GenomeRNAi" id="159963"/>
<dbReference type="Pharos" id="Q1EHB4">
    <property type="development level" value="Tdark"/>
</dbReference>
<dbReference type="PRO" id="PR:Q1EHB4"/>
<dbReference type="Proteomes" id="UP000005640">
    <property type="component" value="Chromosome 11"/>
</dbReference>
<dbReference type="RNAct" id="Q1EHB4">
    <property type="molecule type" value="protein"/>
</dbReference>
<dbReference type="Bgee" id="ENSG00000148942">
    <property type="expression patterns" value="Expressed in adult mammalian kidney and 76 other cell types or tissues"/>
</dbReference>
<dbReference type="ExpressionAtlas" id="Q1EHB4">
    <property type="expression patterns" value="baseline and differential"/>
</dbReference>
<dbReference type="GO" id="GO:0016324">
    <property type="term" value="C:apical plasma membrane"/>
    <property type="evidence" value="ECO:0000314"/>
    <property type="project" value="UniProtKB"/>
</dbReference>
<dbReference type="GO" id="GO:0070062">
    <property type="term" value="C:extracellular exosome"/>
    <property type="evidence" value="ECO:0007005"/>
    <property type="project" value="UniProtKB"/>
</dbReference>
<dbReference type="GO" id="GO:0005654">
    <property type="term" value="C:nucleoplasm"/>
    <property type="evidence" value="ECO:0000314"/>
    <property type="project" value="HPA"/>
</dbReference>
<dbReference type="GO" id="GO:0005886">
    <property type="term" value="C:plasma membrane"/>
    <property type="evidence" value="ECO:0000314"/>
    <property type="project" value="HPA"/>
</dbReference>
<dbReference type="GO" id="GO:0015129">
    <property type="term" value="F:lactate transmembrane transporter activity"/>
    <property type="evidence" value="ECO:0000318"/>
    <property type="project" value="GO_Central"/>
</dbReference>
<dbReference type="GO" id="GO:0140161">
    <property type="term" value="F:monocarboxylate:sodium symporter activity"/>
    <property type="evidence" value="ECO:0000250"/>
    <property type="project" value="UniProtKB"/>
</dbReference>
<dbReference type="GO" id="GO:0005343">
    <property type="term" value="F:organic acid:sodium symporter activity"/>
    <property type="evidence" value="ECO:0000304"/>
    <property type="project" value="Reactome"/>
</dbReference>
<dbReference type="GO" id="GO:0015293">
    <property type="term" value="F:symporter activity"/>
    <property type="evidence" value="ECO:0000318"/>
    <property type="project" value="GO_Central"/>
</dbReference>
<dbReference type="GO" id="GO:0006811">
    <property type="term" value="P:monoatomic ion transport"/>
    <property type="evidence" value="ECO:0000304"/>
    <property type="project" value="Reactome"/>
</dbReference>
<dbReference type="GO" id="GO:0015718">
    <property type="term" value="P:monocarboxylic acid transport"/>
    <property type="evidence" value="ECO:0000250"/>
    <property type="project" value="UniProtKB"/>
</dbReference>
<dbReference type="GO" id="GO:0006814">
    <property type="term" value="P:sodium ion transport"/>
    <property type="evidence" value="ECO:0000318"/>
    <property type="project" value="GO_Central"/>
</dbReference>
<dbReference type="CDD" id="cd11520">
    <property type="entry name" value="SLC5sbd_SMCT2"/>
    <property type="match status" value="1"/>
</dbReference>
<dbReference type="FunFam" id="1.20.1730.10:FF:000007">
    <property type="entry name" value="Sodium-coupled monocarboxylate transporter 2"/>
    <property type="match status" value="1"/>
</dbReference>
<dbReference type="Gene3D" id="1.20.1730.10">
    <property type="entry name" value="Sodium/glucose cotransporter"/>
    <property type="match status" value="1"/>
</dbReference>
<dbReference type="InterPro" id="IPR038377">
    <property type="entry name" value="Na/Glc_symporter_sf"/>
</dbReference>
<dbReference type="InterPro" id="IPR001734">
    <property type="entry name" value="Na/solute_symporter"/>
</dbReference>
<dbReference type="InterPro" id="IPR042700">
    <property type="entry name" value="SMCT2_SLC5sbd"/>
</dbReference>
<dbReference type="InterPro" id="IPR051163">
    <property type="entry name" value="Sodium:Solute_Symporter_SSF"/>
</dbReference>
<dbReference type="NCBIfam" id="TIGR00813">
    <property type="entry name" value="sss"/>
    <property type="match status" value="1"/>
</dbReference>
<dbReference type="PANTHER" id="PTHR42985">
    <property type="entry name" value="SODIUM-COUPLED MONOCARBOXYLATE TRANSPORTER"/>
    <property type="match status" value="1"/>
</dbReference>
<dbReference type="PANTHER" id="PTHR42985:SF15">
    <property type="entry name" value="SODIUM-COUPLED MONOCARBOXYLATE TRANSPORTER 2"/>
    <property type="match status" value="1"/>
</dbReference>
<dbReference type="Pfam" id="PF00474">
    <property type="entry name" value="SSF"/>
    <property type="match status" value="1"/>
</dbReference>
<dbReference type="PROSITE" id="PS50283">
    <property type="entry name" value="NA_SOLUT_SYMP_3"/>
    <property type="match status" value="1"/>
</dbReference>
<keyword id="KW-0025">Alternative splicing</keyword>
<keyword id="KW-1003">Cell membrane</keyword>
<keyword id="KW-0325">Glycoprotein</keyword>
<keyword id="KW-0406">Ion transport</keyword>
<keyword id="KW-0472">Membrane</keyword>
<keyword id="KW-1267">Proteomics identification</keyword>
<keyword id="KW-1185">Reference proteome</keyword>
<keyword id="KW-0915">Sodium</keyword>
<keyword id="KW-0739">Sodium transport</keyword>
<keyword id="KW-0769">Symport</keyword>
<keyword id="KW-0812">Transmembrane</keyword>
<keyword id="KW-1133">Transmembrane helix</keyword>
<keyword id="KW-0813">Transport</keyword>
<organism>
    <name type="scientific">Homo sapiens</name>
    <name type="common">Human</name>
    <dbReference type="NCBI Taxonomy" id="9606"/>
    <lineage>
        <taxon>Eukaryota</taxon>
        <taxon>Metazoa</taxon>
        <taxon>Chordata</taxon>
        <taxon>Craniata</taxon>
        <taxon>Vertebrata</taxon>
        <taxon>Euteleostomi</taxon>
        <taxon>Mammalia</taxon>
        <taxon>Eutheria</taxon>
        <taxon>Euarchontoglires</taxon>
        <taxon>Primates</taxon>
        <taxon>Haplorrhini</taxon>
        <taxon>Catarrhini</taxon>
        <taxon>Hominidae</taxon>
        <taxon>Homo</taxon>
    </lineage>
</organism>
<reference key="1">
    <citation type="journal article" date="2007" name="Biochim. Biophys. Acta">
        <title>Cloning and functional characterization of human SMCT2 (SLC5A12) and expression pattern of the transporter in kidney.</title>
        <authorList>
            <person name="Gopal E."/>
            <person name="Umapathy N.S."/>
            <person name="Martin P.M."/>
            <person name="Ananth S."/>
            <person name="Gnana-Prakasam J.P."/>
            <person name="Becker H."/>
            <person name="Wagner C.A."/>
            <person name="Ganapathy V."/>
            <person name="Prasad P.D."/>
        </authorList>
    </citation>
    <scope>NUCLEOTIDE SEQUENCE [MRNA] (ISOFORM 1)</scope>
    <scope>FUNCTION</scope>
    <scope>INHIBITION</scope>
    <scope>SUBCELLULAR LOCATION</scope>
    <scope>TISSUE SPECIFICITY</scope>
</reference>
<reference key="2">
    <citation type="submission" date="2003-05" db="EMBL/GenBank/DDBJ databases">
        <title>Sequence of a novel human sodium-solute cotransporter similar to the sodium-iodide transporter.</title>
        <authorList>
            <person name="Mount D.B."/>
        </authorList>
    </citation>
    <scope>NUCLEOTIDE SEQUENCE [MRNA] (ISOFORM 1)</scope>
</reference>
<reference key="3">
    <citation type="journal article" date="2006" name="Nature">
        <title>Human chromosome 11 DNA sequence and analysis including novel gene identification.</title>
        <authorList>
            <person name="Taylor T.D."/>
            <person name="Noguchi H."/>
            <person name="Totoki Y."/>
            <person name="Toyoda A."/>
            <person name="Kuroki Y."/>
            <person name="Dewar K."/>
            <person name="Lloyd C."/>
            <person name="Itoh T."/>
            <person name="Takeda T."/>
            <person name="Kim D.-W."/>
            <person name="She X."/>
            <person name="Barlow K.F."/>
            <person name="Bloom T."/>
            <person name="Bruford E."/>
            <person name="Chang J.L."/>
            <person name="Cuomo C.A."/>
            <person name="Eichler E."/>
            <person name="FitzGerald M.G."/>
            <person name="Jaffe D.B."/>
            <person name="LaButti K."/>
            <person name="Nicol R."/>
            <person name="Park H.-S."/>
            <person name="Seaman C."/>
            <person name="Sougnez C."/>
            <person name="Yang X."/>
            <person name="Zimmer A.R."/>
            <person name="Zody M.C."/>
            <person name="Birren B.W."/>
            <person name="Nusbaum C."/>
            <person name="Fujiyama A."/>
            <person name="Hattori M."/>
            <person name="Rogers J."/>
            <person name="Lander E.S."/>
            <person name="Sakaki Y."/>
        </authorList>
    </citation>
    <scope>NUCLEOTIDE SEQUENCE [LARGE SCALE GENOMIC DNA]</scope>
</reference>
<reference key="4">
    <citation type="journal article" date="2004" name="Genome Res.">
        <title>The status, quality, and expansion of the NIH full-length cDNA project: the Mammalian Gene Collection (MGC).</title>
        <authorList>
            <consortium name="The MGC Project Team"/>
        </authorList>
    </citation>
    <scope>NUCLEOTIDE SEQUENCE [LARGE SCALE MRNA] (ISOFORM 2)</scope>
    <source>
        <tissue>Colon</tissue>
    </source>
</reference>
<feature type="chain" id="PRO_0000337680" description="Sodium-coupled monocarboxylate transporter 2">
    <location>
        <begin position="1"/>
        <end position="618"/>
    </location>
</feature>
<feature type="topological domain" description="Extracellular" evidence="3">
    <location>
        <begin position="1"/>
        <end position="9"/>
    </location>
</feature>
<feature type="transmembrane region" description="Helical" evidence="3">
    <location>
        <begin position="10"/>
        <end position="30"/>
    </location>
</feature>
<feature type="topological domain" description="Cytoplasmic" evidence="3">
    <location>
        <begin position="31"/>
        <end position="47"/>
    </location>
</feature>
<feature type="transmembrane region" description="Helical" evidence="3">
    <location>
        <begin position="48"/>
        <end position="68"/>
    </location>
</feature>
<feature type="topological domain" description="Extracellular" evidence="3">
    <location>
        <begin position="69"/>
        <end position="82"/>
    </location>
</feature>
<feature type="transmembrane region" description="Helical" evidence="3">
    <location>
        <begin position="83"/>
        <end position="103"/>
    </location>
</feature>
<feature type="topological domain" description="Cytoplasmic" evidence="3">
    <location>
        <begin position="104"/>
        <end position="128"/>
    </location>
</feature>
<feature type="transmembrane region" description="Helical" evidence="3">
    <location>
        <begin position="129"/>
        <end position="149"/>
    </location>
</feature>
<feature type="topological domain" description="Extracellular" evidence="3">
    <location>
        <begin position="150"/>
        <end position="157"/>
    </location>
</feature>
<feature type="transmembrane region" description="Helical" evidence="3">
    <location>
        <begin position="158"/>
        <end position="178"/>
    </location>
</feature>
<feature type="topological domain" description="Cytoplasmic" evidence="3">
    <location>
        <begin position="179"/>
        <end position="180"/>
    </location>
</feature>
<feature type="transmembrane region" description="Helical" evidence="3">
    <location>
        <begin position="181"/>
        <end position="201"/>
    </location>
</feature>
<feature type="topological domain" description="Extracellular" evidence="3">
    <location>
        <begin position="202"/>
        <end position="235"/>
    </location>
</feature>
<feature type="transmembrane region" description="Helical" evidence="3">
    <location>
        <begin position="236"/>
        <end position="256"/>
    </location>
</feature>
<feature type="topological domain" description="Cytoplasmic" evidence="3">
    <location>
        <begin position="257"/>
        <end position="275"/>
    </location>
</feature>
<feature type="transmembrane region" description="Helical" evidence="3">
    <location>
        <begin position="276"/>
        <end position="296"/>
    </location>
</feature>
<feature type="topological domain" description="Extracellular" evidence="3">
    <location>
        <begin position="297"/>
        <end position="321"/>
    </location>
</feature>
<feature type="transmembrane region" description="Helical" evidence="3">
    <location>
        <begin position="322"/>
        <end position="342"/>
    </location>
</feature>
<feature type="topological domain" description="Cytoplasmic" evidence="3">
    <location>
        <begin position="343"/>
        <end position="385"/>
    </location>
</feature>
<feature type="transmembrane region" description="Helical" evidence="3">
    <location>
        <begin position="386"/>
        <end position="406"/>
    </location>
</feature>
<feature type="topological domain" description="Extracellular" evidence="3">
    <location>
        <begin position="407"/>
        <end position="411"/>
    </location>
</feature>
<feature type="transmembrane region" description="Helical" evidence="3">
    <location>
        <begin position="412"/>
        <end position="432"/>
    </location>
</feature>
<feature type="topological domain" description="Cytoplasmic" evidence="3">
    <location>
        <begin position="433"/>
        <end position="437"/>
    </location>
</feature>
<feature type="transmembrane region" description="Helical" evidence="3">
    <location>
        <begin position="438"/>
        <end position="458"/>
    </location>
</feature>
<feature type="topological domain" description="Extracellular" evidence="3">
    <location>
        <begin position="459"/>
        <end position="504"/>
    </location>
</feature>
<feature type="transmembrane region" description="Helical" evidence="3">
    <location>
        <begin position="505"/>
        <end position="525"/>
    </location>
</feature>
<feature type="topological domain" description="Cytoplasmic" evidence="3">
    <location>
        <begin position="526"/>
        <end position="618"/>
    </location>
</feature>
<feature type="glycosylation site" description="N-linked (GlcNAc...) asparagine" evidence="3">
    <location>
        <position position="480"/>
    </location>
</feature>
<feature type="splice variant" id="VSP_033994" description="In isoform 2." evidence="5">
    <original>LLFGVMCTSMA</original>
    <variation>RYSWWTFYSIS</variation>
    <location>
        <begin position="386"/>
        <end position="396"/>
    </location>
</feature>
<feature type="splice variant" id="VSP_033995" description="In isoform 2." evidence="5">
    <location>
        <begin position="397"/>
        <end position="618"/>
    </location>
</feature>
<feature type="sequence variant" id="VAR_043703" description="In dbSNP:rs12278761.">
    <original>V</original>
    <variation>L</variation>
    <location>
        <position position="510"/>
    </location>
</feature>
<feature type="sequence conflict" description="In Ref. 2; AAQ73572." evidence="6" ref="2">
    <original>I</original>
    <variation>V</variation>
    <location>
        <position position="285"/>
    </location>
</feature>
<feature type="sequence conflict" description="In Ref. 2; AAQ73572." evidence="6" ref="2">
    <original>A</original>
    <variation>S</variation>
    <location>
        <position position="396"/>
    </location>
</feature>
<comment type="function">
    <text evidence="1 2 4">Acts as an electroneutral and low-affinity sodium (Na(+))-dependent sodium-coupled solute transporter (PubMed:17692818). Catalyzes the transport across the plasma membrane of many monocarboxylates such as lactate, pyruvate, nicotinate, propionate, butyrate and beta-D-hydroxybutyrate (By similarity). May be responsible for the first step of reabsorption of monocarboxylates from the lumen of the proximal tubule of the kidney and the small intestine. May play also a role in monocarboxylates transport in the retina (By similarity).</text>
</comment>
<comment type="catalytic activity">
    <reaction evidence="2">
        <text>(S)-lactate(out) + Na(+)(out) = (S)-lactate(in) + Na(+)(in)</text>
        <dbReference type="Rhea" id="RHEA:75791"/>
        <dbReference type="ChEBI" id="CHEBI:16651"/>
        <dbReference type="ChEBI" id="CHEBI:29101"/>
    </reaction>
</comment>
<comment type="catalytic activity">
    <reaction evidence="2">
        <text>nicotinate(out) + Na(+)(out) = nicotinate(in) + Na(+)(in)</text>
        <dbReference type="Rhea" id="RHEA:75795"/>
        <dbReference type="ChEBI" id="CHEBI:29101"/>
        <dbReference type="ChEBI" id="CHEBI:32544"/>
    </reaction>
</comment>
<comment type="catalytic activity">
    <reaction evidence="2">
        <text>pyruvate(out) + Na(+)(out) = pyruvate(in) + Na(+)(in)</text>
        <dbReference type="Rhea" id="RHEA:75799"/>
        <dbReference type="ChEBI" id="CHEBI:15361"/>
        <dbReference type="ChEBI" id="CHEBI:29101"/>
    </reaction>
</comment>
<comment type="catalytic activity">
    <reaction evidence="2">
        <text>propanoate(out) + Na(+)(out) = propanoate(in) + Na(+)(in)</text>
        <dbReference type="Rhea" id="RHEA:75807"/>
        <dbReference type="ChEBI" id="CHEBI:17272"/>
        <dbReference type="ChEBI" id="CHEBI:29101"/>
    </reaction>
</comment>
<comment type="catalytic activity">
    <reaction evidence="2">
        <text>butanoate(out) + Na(+)(out) = butanoate(in) + Na(+)(in)</text>
        <dbReference type="Rhea" id="RHEA:75803"/>
        <dbReference type="ChEBI" id="CHEBI:17968"/>
        <dbReference type="ChEBI" id="CHEBI:29101"/>
    </reaction>
</comment>
<comment type="catalytic activity">
    <reaction evidence="2">
        <text>acetoacetate(out) + Na(+)(out) = acetoacetate(in) + Na(+)(in)</text>
        <dbReference type="Rhea" id="RHEA:75811"/>
        <dbReference type="ChEBI" id="CHEBI:13705"/>
        <dbReference type="ChEBI" id="CHEBI:29101"/>
    </reaction>
</comment>
<comment type="activity regulation">
    <text evidence="4">Cotransport of monocarboxylates and nicotinate strongly inhibited by ibuprofen, fenoprofen and ketoprofen.</text>
</comment>
<comment type="subcellular location">
    <subcellularLocation>
        <location evidence="4">Apical cell membrane</location>
        <topology evidence="4">Multi-pass membrane protein</topology>
    </subcellularLocation>
    <text evidence="1">Detected at the brush border membrane of the kidney. Colocalizes with viementin in Mueller cells.</text>
</comment>
<comment type="alternative products">
    <event type="alternative splicing"/>
    <isoform>
        <id>Q1EHB4-1</id>
        <name>1</name>
        <sequence type="displayed"/>
    </isoform>
    <isoform>
        <id>Q1EHB4-2</id>
        <name>2</name>
        <sequence type="described" ref="VSP_033994 VSP_033995"/>
    </isoform>
</comment>
<comment type="similarity">
    <text evidence="6">Belongs to the sodium:solute symporter (SSF) (TC 2.A.21) family.</text>
</comment>
<sequence length="618" mass="67647">MEVKNFAVWDYVVFAALFFISSGIGVFFAIKERKKATSREFLVGGRQMSFGPVGLSLTASFMSAVTVLGTPSEVYRFGASFLVFFIAYLFVILLTSELFLPVFYRSGITSTYEYLQLRFNKPVRYAATVIYIVQTILYTGVVVYAPALALNQVTGFDLWGSVFATGIVCTFYCTLGGLKAVVWTDAFQMVVMIVGFLTVLIQGSTHAGGFHNVLEQSTNGSRLHIFDFDVDPLRRHTFWTITVGGTFTWLGIYGVNQSTIQRCISCKTEKHAKLALYFNLLGLWIILVCAVFSGLIMYSHFKDCDPWTSGIISAPDQLMPYFVMEIFATMPGLPGLFVACAFSGTLSTVASSINALATVTFEDFVKSCFPHLSDKLSTWISKGLCLLFGVMCTSMAVAASVMGGVVQASLSIHGMCGGPMLGLFSLGIVFPFVNWKGALGGLLTGITLSFWVAIGAFIYPAPASKTWPLPLSTDQCIKSNVTATGPPVLSSRPGIADTWYSISYLYYSAVGCLGCIVAGVIISLITGRQRGEDIQPLLIRPVCNLFCFWSKKYKTLCWCGVQHDSGTEQENLENGSARKQGAESVLQNGLRRESLVHVPGYDPKDKSYNNMAFETTHF</sequence>
<protein>
    <recommendedName>
        <fullName evidence="6">Sodium-coupled monocarboxylate transporter 2</fullName>
    </recommendedName>
    <alternativeName>
        <fullName>Electroneutral sodium monocarboxylate cotransporter</fullName>
    </alternativeName>
    <alternativeName>
        <fullName>Low-affinity sodium-lactate cotransporter</fullName>
    </alternativeName>
    <alternativeName>
        <fullName>Solute carrier family 5 member 12</fullName>
    </alternativeName>
</protein>
<accession>Q1EHB4</accession>
<accession>Q86UC7</accession>